<accession>Q5BBL5</accession>
<accession>C8VLP1</accession>
<gene>
    <name evidence="2" type="primary">pan2</name>
    <name type="ORF">AN2065</name>
</gene>
<organism>
    <name type="scientific">Emericella nidulans (strain FGSC A4 / ATCC 38163 / CBS 112.46 / NRRL 194 / M139)</name>
    <name type="common">Aspergillus nidulans</name>
    <dbReference type="NCBI Taxonomy" id="227321"/>
    <lineage>
        <taxon>Eukaryota</taxon>
        <taxon>Fungi</taxon>
        <taxon>Dikarya</taxon>
        <taxon>Ascomycota</taxon>
        <taxon>Pezizomycotina</taxon>
        <taxon>Eurotiomycetes</taxon>
        <taxon>Eurotiomycetidae</taxon>
        <taxon>Eurotiales</taxon>
        <taxon>Aspergillaceae</taxon>
        <taxon>Aspergillus</taxon>
        <taxon>Aspergillus subgen. Nidulantes</taxon>
    </lineage>
</organism>
<protein>
    <recommendedName>
        <fullName evidence="2">PAN2-PAN3 deadenylation complex catalytic subunit pan2</fullName>
        <ecNumber evidence="2">3.1.13.4</ecNumber>
    </recommendedName>
    <alternativeName>
        <fullName evidence="2">PAB1P-dependent poly(A)-specific ribonuclease</fullName>
    </alternativeName>
    <alternativeName>
        <fullName evidence="2">Poly(A)-nuclease deadenylation complex subunit 2</fullName>
        <shortName evidence="2">PAN deadenylation complex subunit 2</shortName>
    </alternativeName>
</protein>
<comment type="function">
    <text evidence="2">Catalytic subunit of the poly(A)-nuclease (PAN) deadenylation complex, one of two cytoplasmic mRNA deadenylases involved in mRNA turnover. PAN specifically shortens poly(A) tails of RNA and the activity is stimulated by poly(A)-binding protein pab1. PAN deadenylation is followed by rapid degradation of the shortened mRNA tails by the CCR4-NOT complex. Deadenylated mRNAs are then degraded by two alternative mechanisms, namely exosome-mediated 3'-5' exonucleolytic degradation, or deadenylation-dependent mRNA decaping and subsequent 5'-3' exonucleolytic degradation by xrn1. May also be involved in post-transcriptional maturation of mRNA poly(A) tails.</text>
</comment>
<comment type="catalytic activity">
    <reaction evidence="2">
        <text>Exonucleolytic cleavage of poly(A) to 5'-AMP.</text>
        <dbReference type="EC" id="3.1.13.4"/>
    </reaction>
</comment>
<comment type="cofactor">
    <cofactor evidence="2">
        <name>a divalent metal cation</name>
        <dbReference type="ChEBI" id="CHEBI:60240"/>
    </cofactor>
    <text evidence="2">Binds 2 metal cations per subunit in the catalytic exonuclease domain.</text>
</comment>
<comment type="activity regulation">
    <text evidence="1 2">Positively regulated by the regulatory subunit pan3.</text>
</comment>
<comment type="subunit">
    <text evidence="2">Forms a heterotrimer with an asymmetric homodimer of the regulatory subunit pan3 to form the poly(A)-nuclease (PAN) deadenylation complex.</text>
</comment>
<comment type="subcellular location">
    <subcellularLocation>
        <location evidence="2">Cytoplasm</location>
    </subcellularLocation>
</comment>
<comment type="domain">
    <text evidence="2">Contains a pseudo-UCH domain. This ubiquitin C-terminal hydrolase (UCH)-like or ubiquitin specific protease (USP)-like domain is predicted to be catalytically inactive because it lacks the active site catalytic triad characteristic of thiol proteases, with residues at the equivalent structural positions that are incompatible with catalysis, and it cannot bind ubiquitin. It functions as a structural scaffold for intra- and intermolecular interactions in the complex.</text>
</comment>
<comment type="domain">
    <text evidence="2">The linker, or PAN3 interaction domain (PID), between the WD40 repeats and the pseudo-UCH domain mediates interaction with pan3.</text>
</comment>
<comment type="similarity">
    <text evidence="2">Belongs to the peptidase C19 family. PAN2 subfamily.</text>
</comment>
<reference key="1">
    <citation type="journal article" date="2005" name="Nature">
        <title>Sequencing of Aspergillus nidulans and comparative analysis with A. fumigatus and A. oryzae.</title>
        <authorList>
            <person name="Galagan J.E."/>
            <person name="Calvo S.E."/>
            <person name="Cuomo C."/>
            <person name="Ma L.-J."/>
            <person name="Wortman J.R."/>
            <person name="Batzoglou S."/>
            <person name="Lee S.-I."/>
            <person name="Bastuerkmen M."/>
            <person name="Spevak C.C."/>
            <person name="Clutterbuck J."/>
            <person name="Kapitonov V."/>
            <person name="Jurka J."/>
            <person name="Scazzocchio C."/>
            <person name="Farman M.L."/>
            <person name="Butler J."/>
            <person name="Purcell S."/>
            <person name="Harris S."/>
            <person name="Braus G.H."/>
            <person name="Draht O."/>
            <person name="Busch S."/>
            <person name="D'Enfert C."/>
            <person name="Bouchier C."/>
            <person name="Goldman G.H."/>
            <person name="Bell-Pedersen D."/>
            <person name="Griffiths-Jones S."/>
            <person name="Doonan J.H."/>
            <person name="Yu J."/>
            <person name="Vienken K."/>
            <person name="Pain A."/>
            <person name="Freitag M."/>
            <person name="Selker E.U."/>
            <person name="Archer D.B."/>
            <person name="Penalva M.A."/>
            <person name="Oakley B.R."/>
            <person name="Momany M."/>
            <person name="Tanaka T."/>
            <person name="Kumagai T."/>
            <person name="Asai K."/>
            <person name="Machida M."/>
            <person name="Nierman W.C."/>
            <person name="Denning D.W."/>
            <person name="Caddick M.X."/>
            <person name="Hynes M."/>
            <person name="Paoletti M."/>
            <person name="Fischer R."/>
            <person name="Miller B.L."/>
            <person name="Dyer P.S."/>
            <person name="Sachs M.S."/>
            <person name="Osmani S.A."/>
            <person name="Birren B.W."/>
        </authorList>
    </citation>
    <scope>NUCLEOTIDE SEQUENCE [LARGE SCALE GENOMIC DNA]</scope>
    <source>
        <strain>FGSC A4 / ATCC 38163 / CBS 112.46 / NRRL 194 / M139</strain>
    </source>
</reference>
<reference key="2">
    <citation type="journal article" date="2009" name="Fungal Genet. Biol.">
        <title>The 2008 update of the Aspergillus nidulans genome annotation: a community effort.</title>
        <authorList>
            <person name="Wortman J.R."/>
            <person name="Gilsenan J.M."/>
            <person name="Joardar V."/>
            <person name="Deegan J."/>
            <person name="Clutterbuck J."/>
            <person name="Andersen M.R."/>
            <person name="Archer D."/>
            <person name="Bencina M."/>
            <person name="Braus G."/>
            <person name="Coutinho P."/>
            <person name="von Dohren H."/>
            <person name="Doonan J."/>
            <person name="Driessen A.J."/>
            <person name="Durek P."/>
            <person name="Espeso E."/>
            <person name="Fekete E."/>
            <person name="Flipphi M."/>
            <person name="Estrada C.G."/>
            <person name="Geysens S."/>
            <person name="Goldman G."/>
            <person name="de Groot P.W."/>
            <person name="Hansen K."/>
            <person name="Harris S.D."/>
            <person name="Heinekamp T."/>
            <person name="Helmstaedt K."/>
            <person name="Henrissat B."/>
            <person name="Hofmann G."/>
            <person name="Homan T."/>
            <person name="Horio T."/>
            <person name="Horiuchi H."/>
            <person name="James S."/>
            <person name="Jones M."/>
            <person name="Karaffa L."/>
            <person name="Karanyi Z."/>
            <person name="Kato M."/>
            <person name="Keller N."/>
            <person name="Kelly D.E."/>
            <person name="Kiel J.A."/>
            <person name="Kim J.M."/>
            <person name="van der Klei I.J."/>
            <person name="Klis F.M."/>
            <person name="Kovalchuk A."/>
            <person name="Krasevec N."/>
            <person name="Kubicek C.P."/>
            <person name="Liu B."/>
            <person name="Maccabe A."/>
            <person name="Meyer V."/>
            <person name="Mirabito P."/>
            <person name="Miskei M."/>
            <person name="Mos M."/>
            <person name="Mullins J."/>
            <person name="Nelson D.R."/>
            <person name="Nielsen J."/>
            <person name="Oakley B.R."/>
            <person name="Osmani S.A."/>
            <person name="Pakula T."/>
            <person name="Paszewski A."/>
            <person name="Paulsen I."/>
            <person name="Pilsyk S."/>
            <person name="Pocsi I."/>
            <person name="Punt P.J."/>
            <person name="Ram A.F."/>
            <person name="Ren Q."/>
            <person name="Robellet X."/>
            <person name="Robson G."/>
            <person name="Seiboth B."/>
            <person name="van Solingen P."/>
            <person name="Specht T."/>
            <person name="Sun J."/>
            <person name="Taheri-Talesh N."/>
            <person name="Takeshita N."/>
            <person name="Ussery D."/>
            <person name="vanKuyk P.A."/>
            <person name="Visser H."/>
            <person name="van de Vondervoort P.J."/>
            <person name="de Vries R.P."/>
            <person name="Walton J."/>
            <person name="Xiang X."/>
            <person name="Xiong Y."/>
            <person name="Zeng A.P."/>
            <person name="Brandt B.W."/>
            <person name="Cornell M.J."/>
            <person name="van den Hondel C.A."/>
            <person name="Visser J."/>
            <person name="Oliver S.G."/>
            <person name="Turner G."/>
        </authorList>
    </citation>
    <scope>GENOME REANNOTATION</scope>
    <source>
        <strain>FGSC A4 / ATCC 38163 / CBS 112.46 / NRRL 194 / M139</strain>
    </source>
</reference>
<name>PAN2_EMENI</name>
<feature type="chain" id="PRO_0000295346" description="PAN2-PAN3 deadenylation complex catalytic subunit pan2">
    <location>
        <begin position="1"/>
        <end position="1154"/>
    </location>
</feature>
<feature type="repeat" description="WD 1" evidence="2">
    <location>
        <begin position="20"/>
        <end position="59"/>
    </location>
</feature>
<feature type="repeat" description="WD 2" evidence="2">
    <location>
        <begin position="102"/>
        <end position="145"/>
    </location>
</feature>
<feature type="repeat" description="WD 3" evidence="2">
    <location>
        <begin position="276"/>
        <end position="315"/>
    </location>
</feature>
<feature type="domain" description="USP" evidence="2">
    <location>
        <begin position="452"/>
        <end position="821"/>
    </location>
</feature>
<feature type="domain" description="Exonuclease" evidence="2">
    <location>
        <begin position="870"/>
        <end position="1048"/>
    </location>
</feature>
<feature type="region of interest" description="Linker" evidence="2">
    <location>
        <begin position="316"/>
        <end position="451"/>
    </location>
</feature>
<feature type="region of interest" description="Disordered" evidence="3">
    <location>
        <begin position="1092"/>
        <end position="1154"/>
    </location>
</feature>
<feature type="compositionally biased region" description="Polar residues" evidence="3">
    <location>
        <begin position="1096"/>
        <end position="1109"/>
    </location>
</feature>
<feature type="compositionally biased region" description="Polar residues" evidence="3">
    <location>
        <begin position="1132"/>
        <end position="1141"/>
    </location>
</feature>
<feature type="binding site" evidence="2">
    <location>
        <position position="873"/>
    </location>
    <ligand>
        <name>a divalent metal cation</name>
        <dbReference type="ChEBI" id="CHEBI:60240"/>
        <note>catalytic</note>
    </ligand>
</feature>
<feature type="binding site" evidence="2">
    <location>
        <position position="875"/>
    </location>
    <ligand>
        <name>a divalent metal cation</name>
        <dbReference type="ChEBI" id="CHEBI:60240"/>
        <note>catalytic</note>
    </ligand>
</feature>
<feature type="binding site" evidence="2">
    <location>
        <position position="982"/>
    </location>
    <ligand>
        <name>a divalent metal cation</name>
        <dbReference type="ChEBI" id="CHEBI:60240"/>
        <note>catalytic</note>
    </ligand>
</feature>
<feature type="binding site" evidence="2">
    <location>
        <position position="1041"/>
    </location>
    <ligand>
        <name>a divalent metal cation</name>
        <dbReference type="ChEBI" id="CHEBI:60240"/>
        <note>catalytic</note>
    </ligand>
</feature>
<sequence length="1154" mass="129264">MEADWNELLRIPLPPPNPHGLPTVATTIAFDDVSELLWAGNEYGRITSFYGPELQRYTSVRAHPVAEGPVRQILFHERGVISISSRSVHMITRRGLTQWHITHDEITDLRCMSFTAQTNKIIVAGCQKAMFTIDIDKGTIVDKLRTEHNYVLMKRSRYLCAATDTGSVNALSLTDFSVVKSWKAHGAAVNDMDARGDLLVTCGFSIRQTGSPIVDPLANVYDLKTLSPLPPIPFHAGAAYVRMHPKLQTTSFVASQSGQLQVVDLMNPNAFKLRQATVSFMLGIEISPSGEALAINDAECFIQLWGSPAKIHFNEMSKEVEFADVTPRPPQVDWSPEIPLNVIGMPYYHERLLSAWPSHLLFEVGSPPAPIDPSIVPYLRSGEMGQYAANPKKTRRYQVENTRALASTEPTLIAPKFLSEKAREQSKKADDPVGDTAASLAGARISGESEDDPLLKYSNVEIKYSRFGVDDFDFRFYNQTCFSGLETHIANSFTNSLLQLLKFIPLIRNIALHHAATSCIAESCLLCEMGYLFDMLEKANGQNCQATNLLKTFSSFREASNLGLLEENLTNKSLSSAIQAVNRFFLGQIAQDYRRIAPNSEELDMRLATIASESIRCMFCQNEIVRPGNTLVNELMYPAIDMKQARRNHTLRFSNILRASIEREAQNRGWCHICRRYQQSVMRKTAHRMPHVLMLNAAINSPACRRLWTIPGWLPEEIGIVLEGGQVLCFEGEDLRMRIQGQMPGLIIYDLVGLVAEINIPEHQKAHLVSFINVSVSSRERETRSKWHLFNDFLVTEVDKEEALRFNQSWKSPCVLAFQVRDARHMVDDTWKNFLDTTLLFRDWSLNNGRPVESRVMLSDEEKPTPGTPVALDTEFVDLEKAEINVKADGSQEIVRPSKSGLARVSVLRGSGEREGVPFIDDYISVKEPIVDYVTQYSGIKPGDLDPRTSPHNIVPLKVAYKKLWLLLNLGCVFVGHGLASDFRKVNIQVPKKQTVDTQYLFFHPSKNRRLSLRYLAWAVFKEYIQEEPADSNQGHDSIEDARMALRLWKKFQEYEDAGIVGQILEEIFREGSKLGFRPPPRNGVTTVLSRPGTAVTMQNNSGRNTPSTPDVGAAASAPTTPRQAFRRSIALTPSNGTFSGPGSGEFFTGSPLK</sequence>
<evidence type="ECO:0000250" key="1"/>
<evidence type="ECO:0000255" key="2">
    <source>
        <dbReference type="HAMAP-Rule" id="MF_03182"/>
    </source>
</evidence>
<evidence type="ECO:0000256" key="3">
    <source>
        <dbReference type="SAM" id="MobiDB-lite"/>
    </source>
</evidence>
<keyword id="KW-0963">Cytoplasm</keyword>
<keyword id="KW-0269">Exonuclease</keyword>
<keyword id="KW-0378">Hydrolase</keyword>
<keyword id="KW-0479">Metal-binding</keyword>
<keyword id="KW-0507">mRNA processing</keyword>
<keyword id="KW-0540">Nuclease</keyword>
<keyword id="KW-1185">Reference proteome</keyword>
<keyword id="KW-0677">Repeat</keyword>
<keyword id="KW-0853">WD repeat</keyword>
<proteinExistence type="inferred from homology"/>
<dbReference type="EC" id="3.1.13.4" evidence="2"/>
<dbReference type="EMBL" id="AACD01000032">
    <property type="protein sequence ID" value="EAA64897.1"/>
    <property type="molecule type" value="Genomic_DNA"/>
</dbReference>
<dbReference type="EMBL" id="BN001307">
    <property type="protein sequence ID" value="CBF86108.1"/>
    <property type="molecule type" value="Genomic_DNA"/>
</dbReference>
<dbReference type="RefSeq" id="XP_659669.1">
    <property type="nucleotide sequence ID" value="XM_654577.1"/>
</dbReference>
<dbReference type="SMR" id="Q5BBL5"/>
<dbReference type="FunCoup" id="Q5BBL5">
    <property type="interactions" value="664"/>
</dbReference>
<dbReference type="STRING" id="227321.Q5BBL5"/>
<dbReference type="EnsemblFungi" id="CBF86108">
    <property type="protein sequence ID" value="CBF86108"/>
    <property type="gene ID" value="ANIA_02065"/>
</dbReference>
<dbReference type="KEGG" id="ani:ANIA_02065"/>
<dbReference type="VEuPathDB" id="FungiDB:AN2065"/>
<dbReference type="eggNOG" id="KOG1275">
    <property type="taxonomic scope" value="Eukaryota"/>
</dbReference>
<dbReference type="HOGENOM" id="CLU_002369_1_0_1"/>
<dbReference type="InParanoid" id="Q5BBL5"/>
<dbReference type="OMA" id="TQELLWT"/>
<dbReference type="OrthoDB" id="16516at2759"/>
<dbReference type="Proteomes" id="UP000000560">
    <property type="component" value="Chromosome VII"/>
</dbReference>
<dbReference type="GO" id="GO:0000932">
    <property type="term" value="C:P-body"/>
    <property type="evidence" value="ECO:0000318"/>
    <property type="project" value="GO_Central"/>
</dbReference>
<dbReference type="GO" id="GO:0031251">
    <property type="term" value="C:PAN complex"/>
    <property type="evidence" value="ECO:0000318"/>
    <property type="project" value="GO_Central"/>
</dbReference>
<dbReference type="GO" id="GO:0046872">
    <property type="term" value="F:metal ion binding"/>
    <property type="evidence" value="ECO:0007669"/>
    <property type="project" value="UniProtKB-KW"/>
</dbReference>
<dbReference type="GO" id="GO:0003676">
    <property type="term" value="F:nucleic acid binding"/>
    <property type="evidence" value="ECO:0007669"/>
    <property type="project" value="InterPro"/>
</dbReference>
<dbReference type="GO" id="GO:0004535">
    <property type="term" value="F:poly(A)-specific ribonuclease activity"/>
    <property type="evidence" value="ECO:0007669"/>
    <property type="project" value="UniProtKB-UniRule"/>
</dbReference>
<dbReference type="GO" id="GO:0006397">
    <property type="term" value="P:mRNA processing"/>
    <property type="evidence" value="ECO:0007669"/>
    <property type="project" value="UniProtKB-KW"/>
</dbReference>
<dbReference type="GO" id="GO:0000289">
    <property type="term" value="P:nuclear-transcribed mRNA poly(A) tail shortening"/>
    <property type="evidence" value="ECO:0000318"/>
    <property type="project" value="GO_Central"/>
</dbReference>
<dbReference type="CDD" id="cd06143">
    <property type="entry name" value="PAN2_exo"/>
    <property type="match status" value="1"/>
</dbReference>
<dbReference type="FunFam" id="2.130.10.10:FF:000459">
    <property type="entry name" value="PAN2-PAN3 deadenylation complex catalytic subunit PAN2"/>
    <property type="match status" value="1"/>
</dbReference>
<dbReference type="FunFam" id="3.30.420.10:FF:000028">
    <property type="entry name" value="PAN2-PAN3 deadenylation complex catalytic subunit PAN2"/>
    <property type="match status" value="1"/>
</dbReference>
<dbReference type="FunFam" id="3.90.70.10:FF:000135">
    <property type="entry name" value="PAN2-PAN3 deadenylation complex catalytic subunit pan2"/>
    <property type="match status" value="1"/>
</dbReference>
<dbReference type="Gene3D" id="3.90.70.10">
    <property type="entry name" value="Cysteine proteinases"/>
    <property type="match status" value="1"/>
</dbReference>
<dbReference type="Gene3D" id="3.30.420.10">
    <property type="entry name" value="Ribonuclease H-like superfamily/Ribonuclease H"/>
    <property type="match status" value="1"/>
</dbReference>
<dbReference type="Gene3D" id="2.130.10.10">
    <property type="entry name" value="YVTN repeat-like/Quinoprotein amine dehydrogenase"/>
    <property type="match status" value="1"/>
</dbReference>
<dbReference type="HAMAP" id="MF_03182">
    <property type="entry name" value="PAN2"/>
    <property type="match status" value="1"/>
</dbReference>
<dbReference type="InterPro" id="IPR013520">
    <property type="entry name" value="Exonuclease_RNaseT/DNA_pol3"/>
</dbReference>
<dbReference type="InterPro" id="IPR030843">
    <property type="entry name" value="PAN2"/>
</dbReference>
<dbReference type="InterPro" id="IPR050785">
    <property type="entry name" value="PAN2-PAN3_catalytic_subunit"/>
</dbReference>
<dbReference type="InterPro" id="IPR048841">
    <property type="entry name" value="PAN2_N"/>
</dbReference>
<dbReference type="InterPro" id="IPR028881">
    <property type="entry name" value="PAN2_UCH_dom"/>
</dbReference>
<dbReference type="InterPro" id="IPR038765">
    <property type="entry name" value="Papain-like_cys_pep_sf"/>
</dbReference>
<dbReference type="InterPro" id="IPR012337">
    <property type="entry name" value="RNaseH-like_sf"/>
</dbReference>
<dbReference type="InterPro" id="IPR036397">
    <property type="entry name" value="RNaseH_sf"/>
</dbReference>
<dbReference type="InterPro" id="IPR028889">
    <property type="entry name" value="USP_dom"/>
</dbReference>
<dbReference type="InterPro" id="IPR015943">
    <property type="entry name" value="WD40/YVTN_repeat-like_dom_sf"/>
</dbReference>
<dbReference type="InterPro" id="IPR036322">
    <property type="entry name" value="WD40_repeat_dom_sf"/>
</dbReference>
<dbReference type="PANTHER" id="PTHR15728">
    <property type="entry name" value="DEADENYLATION COMPLEX CATALYTIC SUBUNIT PAN2"/>
    <property type="match status" value="1"/>
</dbReference>
<dbReference type="PANTHER" id="PTHR15728:SF0">
    <property type="entry name" value="PAN2-PAN3 DEADENYLATION COMPLEX CATALYTIC SUBUNIT PAN2"/>
    <property type="match status" value="1"/>
</dbReference>
<dbReference type="Pfam" id="PF20770">
    <property type="entry name" value="PAN2_N"/>
    <property type="match status" value="1"/>
</dbReference>
<dbReference type="Pfam" id="PF00929">
    <property type="entry name" value="RNase_T"/>
    <property type="match status" value="1"/>
</dbReference>
<dbReference type="Pfam" id="PF13423">
    <property type="entry name" value="UCH_1"/>
    <property type="match status" value="1"/>
</dbReference>
<dbReference type="SMART" id="SM00479">
    <property type="entry name" value="EXOIII"/>
    <property type="match status" value="1"/>
</dbReference>
<dbReference type="SUPFAM" id="SSF54001">
    <property type="entry name" value="Cysteine proteinases"/>
    <property type="match status" value="1"/>
</dbReference>
<dbReference type="SUPFAM" id="SSF53098">
    <property type="entry name" value="Ribonuclease H-like"/>
    <property type="match status" value="1"/>
</dbReference>
<dbReference type="SUPFAM" id="SSF50978">
    <property type="entry name" value="WD40 repeat-like"/>
    <property type="match status" value="1"/>
</dbReference>
<dbReference type="PROSITE" id="PS50235">
    <property type="entry name" value="USP_3"/>
    <property type="match status" value="1"/>
</dbReference>